<feature type="chain" id="PRO_0000147307" description="GTP cyclohydrolase 1 type 2 homolog">
    <location>
        <begin position="1"/>
        <end position="247"/>
    </location>
</feature>
<feature type="binding site" evidence="1">
    <location>
        <position position="63"/>
    </location>
    <ligand>
        <name>a divalent metal cation</name>
        <dbReference type="ChEBI" id="CHEBI:60240"/>
        <label>1</label>
    </ligand>
</feature>
<feature type="binding site" evidence="1">
    <location>
        <position position="64"/>
    </location>
    <ligand>
        <name>a divalent metal cation</name>
        <dbReference type="ChEBI" id="CHEBI:60240"/>
        <label>2</label>
    </ligand>
</feature>
<feature type="binding site" evidence="1">
    <location>
        <position position="101"/>
    </location>
    <ligand>
        <name>a divalent metal cation</name>
        <dbReference type="ChEBI" id="CHEBI:60240"/>
        <label>1</label>
    </ligand>
</feature>
<feature type="binding site" evidence="1">
    <location>
        <position position="215"/>
    </location>
    <ligand>
        <name>a divalent metal cation</name>
        <dbReference type="ChEBI" id="CHEBI:60240"/>
        <label>2</label>
    </ligand>
</feature>
<feature type="binding site" evidence="1">
    <location>
        <position position="219"/>
    </location>
    <ligand>
        <name>a divalent metal cation</name>
        <dbReference type="ChEBI" id="CHEBI:60240"/>
        <label>1</label>
    </ligand>
</feature>
<feature type="binding site" evidence="1">
    <location>
        <position position="219"/>
    </location>
    <ligand>
        <name>a divalent metal cation</name>
        <dbReference type="ChEBI" id="CHEBI:60240"/>
        <label>2</label>
    </ligand>
</feature>
<feature type="helix" evidence="5">
    <location>
        <begin position="3"/>
        <end position="13"/>
    </location>
</feature>
<feature type="strand" evidence="5">
    <location>
        <begin position="26"/>
        <end position="29"/>
    </location>
</feature>
<feature type="strand" evidence="5">
    <location>
        <begin position="37"/>
        <end position="43"/>
    </location>
</feature>
<feature type="helix" evidence="5">
    <location>
        <begin position="46"/>
        <end position="54"/>
    </location>
</feature>
<feature type="strand" evidence="5">
    <location>
        <begin position="58"/>
        <end position="64"/>
    </location>
</feature>
<feature type="helix" evidence="5">
    <location>
        <begin position="78"/>
        <end position="88"/>
    </location>
</feature>
<feature type="strand" evidence="5">
    <location>
        <begin position="92"/>
        <end position="95"/>
    </location>
</feature>
<feature type="helix" evidence="5">
    <location>
        <begin position="98"/>
        <end position="102"/>
    </location>
</feature>
<feature type="turn" evidence="5">
    <location>
        <begin position="104"/>
        <end position="106"/>
    </location>
</feature>
<feature type="helix" evidence="5">
    <location>
        <begin position="108"/>
        <end position="116"/>
    </location>
</feature>
<feature type="strand" evidence="5">
    <location>
        <begin position="118"/>
        <end position="125"/>
    </location>
</feature>
<feature type="strand" evidence="5">
    <location>
        <begin position="128"/>
        <end position="137"/>
    </location>
</feature>
<feature type="helix" evidence="5">
    <location>
        <begin position="139"/>
        <end position="150"/>
    </location>
</feature>
<feature type="strand" evidence="5">
    <location>
        <begin position="155"/>
        <end position="157"/>
    </location>
</feature>
<feature type="strand" evidence="5">
    <location>
        <begin position="163"/>
        <end position="170"/>
    </location>
</feature>
<feature type="strand" evidence="5">
    <location>
        <begin position="172"/>
        <end position="174"/>
    </location>
</feature>
<feature type="helix" evidence="5">
    <location>
        <begin position="176"/>
        <end position="178"/>
    </location>
</feature>
<feature type="helix" evidence="5">
    <location>
        <begin position="179"/>
        <end position="185"/>
    </location>
</feature>
<feature type="strand" evidence="5">
    <location>
        <begin position="188"/>
        <end position="193"/>
    </location>
</feature>
<feature type="helix" evidence="5">
    <location>
        <begin position="197"/>
        <end position="205"/>
    </location>
</feature>
<feature type="strand" evidence="5">
    <location>
        <begin position="209"/>
        <end position="212"/>
    </location>
</feature>
<feature type="helix" evidence="5">
    <location>
        <begin position="215"/>
        <end position="218"/>
    </location>
</feature>
<feature type="helix" evidence="5">
    <location>
        <begin position="221"/>
        <end position="233"/>
    </location>
</feature>
<feature type="strand" evidence="5">
    <location>
        <begin position="237"/>
        <end position="240"/>
    </location>
</feature>
<protein>
    <recommendedName>
        <fullName evidence="4">GTP cyclohydrolase 1 type 2 homolog</fullName>
    </recommendedName>
    <alternativeName>
        <fullName evidence="3">Radiation resistance protein YbgI</fullName>
    </alternativeName>
</protein>
<reference key="1">
    <citation type="journal article" date="1996" name="DNA Res.">
        <title>A 718-kb DNA sequence of the Escherichia coli K-12 genome corresponding to the 12.7-28.0 min region on the linkage map.</title>
        <authorList>
            <person name="Oshima T."/>
            <person name="Aiba H."/>
            <person name="Baba T."/>
            <person name="Fujita K."/>
            <person name="Hayashi K."/>
            <person name="Honjo A."/>
            <person name="Ikemoto K."/>
            <person name="Inada T."/>
            <person name="Itoh T."/>
            <person name="Kajihara M."/>
            <person name="Kanai K."/>
            <person name="Kashimoto K."/>
            <person name="Kimura S."/>
            <person name="Kitagawa M."/>
            <person name="Makino K."/>
            <person name="Masuda S."/>
            <person name="Miki T."/>
            <person name="Mizobuchi K."/>
            <person name="Mori H."/>
            <person name="Motomura K."/>
            <person name="Nakamura Y."/>
            <person name="Nashimoto H."/>
            <person name="Nishio Y."/>
            <person name="Saito N."/>
            <person name="Sampei G."/>
            <person name="Seki Y."/>
            <person name="Tagami H."/>
            <person name="Takemoto K."/>
            <person name="Wada C."/>
            <person name="Yamamoto Y."/>
            <person name="Yano M."/>
            <person name="Horiuchi T."/>
        </authorList>
    </citation>
    <scope>NUCLEOTIDE SEQUENCE [LARGE SCALE GENOMIC DNA]</scope>
    <source>
        <strain>K12 / W3110 / ATCC 27325 / DSM 5911</strain>
    </source>
</reference>
<reference key="2">
    <citation type="journal article" date="1997" name="Science">
        <title>The complete genome sequence of Escherichia coli K-12.</title>
        <authorList>
            <person name="Blattner F.R."/>
            <person name="Plunkett G. III"/>
            <person name="Bloch C.A."/>
            <person name="Perna N.T."/>
            <person name="Burland V."/>
            <person name="Riley M."/>
            <person name="Collado-Vides J."/>
            <person name="Glasner J.D."/>
            <person name="Rode C.K."/>
            <person name="Mayhew G.F."/>
            <person name="Gregor J."/>
            <person name="Davis N.W."/>
            <person name="Kirkpatrick H.A."/>
            <person name="Goeden M.A."/>
            <person name="Rose D.J."/>
            <person name="Mau B."/>
            <person name="Shao Y."/>
        </authorList>
    </citation>
    <scope>NUCLEOTIDE SEQUENCE [LARGE SCALE GENOMIC DNA]</scope>
    <source>
        <strain>K12 / MG1655 / ATCC 47076</strain>
    </source>
</reference>
<reference key="3">
    <citation type="journal article" date="2006" name="Mol. Syst. Biol.">
        <title>Highly accurate genome sequences of Escherichia coli K-12 strains MG1655 and W3110.</title>
        <authorList>
            <person name="Hayashi K."/>
            <person name="Morooka N."/>
            <person name="Yamamoto Y."/>
            <person name="Fujita K."/>
            <person name="Isono K."/>
            <person name="Choi S."/>
            <person name="Ohtsubo E."/>
            <person name="Baba T."/>
            <person name="Wanner B.L."/>
            <person name="Mori H."/>
            <person name="Horiuchi T."/>
        </authorList>
    </citation>
    <scope>NUCLEOTIDE SEQUENCE [LARGE SCALE GENOMIC DNA]</scope>
    <source>
        <strain>K12 / W3110 / ATCC 27325 / DSM 5911</strain>
    </source>
</reference>
<reference key="4">
    <citation type="journal article" date="2014" name="J. Bacteriol.">
        <title>Escherichia coli genes and pathways involved in surviving extreme exposure to ionizing radiation.</title>
        <authorList>
            <person name="Byrne R.T."/>
            <person name="Chen S.H."/>
            <person name="Wood E.A."/>
            <person name="Cabot E.L."/>
            <person name="Cox M.M."/>
        </authorList>
    </citation>
    <scope>FUNCTION</scope>
    <scope>DISRUPTION PHENOTYPE</scope>
    <source>
        <strain>K12</strain>
    </source>
</reference>
<reference key="5">
    <citation type="journal article" date="2003" name="BMC Struct. Biol.">
        <title>Crystal structure of Escherichia coli protein ybgI, a toroidal structure with a dinuclear metal site.</title>
        <authorList>
            <person name="Ladner J.E."/>
            <person name="Obmolova G."/>
            <person name="Teplyakov A."/>
            <person name="Howard A.J."/>
            <person name="Khil P.P."/>
            <person name="Camerini-Otero R.D."/>
            <person name="Gilliland G.L."/>
        </authorList>
    </citation>
    <scope>X-RAY CRYSTALLOGRAPHY (2.2 ANGSTROMS) IN COMPLEX WITH METAL IONS</scope>
    <scope>SUBUNIT</scope>
</reference>
<proteinExistence type="evidence at protein level"/>
<evidence type="ECO:0000269" key="1">
    <source>
    </source>
</evidence>
<evidence type="ECO:0000269" key="2">
    <source>
    </source>
</evidence>
<evidence type="ECO:0000303" key="3">
    <source>
    </source>
</evidence>
<evidence type="ECO:0000305" key="4"/>
<evidence type="ECO:0007829" key="5">
    <source>
        <dbReference type="PDB" id="1NMO"/>
    </source>
</evidence>
<accession>P0AFP6</accession>
<accession>P75743</accession>
<keyword id="KW-0002">3D-structure</keyword>
<keyword id="KW-0227">DNA damage</keyword>
<keyword id="KW-0234">DNA repair</keyword>
<keyword id="KW-0479">Metal-binding</keyword>
<keyword id="KW-1185">Reference proteome</keyword>
<comment type="function">
    <text evidence="2">Provides significant protection from radiation damage and may be involved in the degradation of radiation-damaged nucleotides.</text>
</comment>
<comment type="subunit">
    <text evidence="1">Toroid-shaped homohexamer. In the hexamer, 3 dimers assemble to form a ring-like structure surrounding a central hole.</text>
</comment>
<comment type="disruption phenotype">
    <text evidence="2">Cells lacking this gene show a 2-3 orders of magnitude drop in survival after exposure to ionizing radiation as compared to a wild-type strain.</text>
</comment>
<comment type="similarity">
    <text evidence="4">Belongs to the GTP cyclohydrolase I type 2/NIF3 family.</text>
</comment>
<gene>
    <name type="primary">ybgI</name>
    <name type="ordered locus">b0710</name>
    <name type="ordered locus">JW0700</name>
</gene>
<sequence>MKNTELEQLINEKLNSAAISDYAPNGLQVEGKETVQKIVTGVTASQALLDEAVRLGADAVIVHHGYFWKGESPVIRGMKRNRLKTLLANDINLYGWHLPLDAHPELGNNAQLAALLGITVMGEIEPLVPWGELTMPVPGLELASWIEARLGRKPLWCGDTGPEVVQRVAWCTGGGQSFIDSAARFGVDAFITGEVSEQTIHSAREQGLHFYAAGHHATERGGIRALSEWLNENTDLDVTFIDIPNPA</sequence>
<organism>
    <name type="scientific">Escherichia coli (strain K12)</name>
    <dbReference type="NCBI Taxonomy" id="83333"/>
    <lineage>
        <taxon>Bacteria</taxon>
        <taxon>Pseudomonadati</taxon>
        <taxon>Pseudomonadota</taxon>
        <taxon>Gammaproteobacteria</taxon>
        <taxon>Enterobacterales</taxon>
        <taxon>Enterobacteriaceae</taxon>
        <taxon>Escherichia</taxon>
    </lineage>
</organism>
<name>GCH1L_ECOLI</name>
<dbReference type="EMBL" id="U00096">
    <property type="protein sequence ID" value="AAC73804.1"/>
    <property type="molecule type" value="Genomic_DNA"/>
</dbReference>
<dbReference type="EMBL" id="AP009048">
    <property type="protein sequence ID" value="BAA35374.1"/>
    <property type="molecule type" value="Genomic_DNA"/>
</dbReference>
<dbReference type="PIR" id="E64806">
    <property type="entry name" value="E64806"/>
</dbReference>
<dbReference type="RefSeq" id="NP_415238.1">
    <property type="nucleotide sequence ID" value="NC_000913.3"/>
</dbReference>
<dbReference type="RefSeq" id="WP_000798871.1">
    <property type="nucleotide sequence ID" value="NZ_STEB01000035.1"/>
</dbReference>
<dbReference type="PDB" id="1NMO">
    <property type="method" value="X-ray"/>
    <property type="resolution" value="2.20 A"/>
    <property type="chains" value="A/B/C/D/E/F=1-247"/>
</dbReference>
<dbReference type="PDB" id="1NMP">
    <property type="method" value="X-ray"/>
    <property type="resolution" value="2.20 A"/>
    <property type="chains" value="A/B/C/D/E/F=1-247"/>
</dbReference>
<dbReference type="PDBsum" id="1NMO"/>
<dbReference type="PDBsum" id="1NMP"/>
<dbReference type="SMR" id="P0AFP6"/>
<dbReference type="BioGRID" id="4259921">
    <property type="interactions" value="143"/>
</dbReference>
<dbReference type="DIP" id="DIP-36185N"/>
<dbReference type="FunCoup" id="P0AFP6">
    <property type="interactions" value="281"/>
</dbReference>
<dbReference type="IntAct" id="P0AFP6">
    <property type="interactions" value="6"/>
</dbReference>
<dbReference type="STRING" id="511145.b0710"/>
<dbReference type="jPOST" id="P0AFP6"/>
<dbReference type="PaxDb" id="511145-b0710"/>
<dbReference type="EnsemblBacteria" id="AAC73804">
    <property type="protein sequence ID" value="AAC73804"/>
    <property type="gene ID" value="b0710"/>
</dbReference>
<dbReference type="GeneID" id="75205542"/>
<dbReference type="GeneID" id="945824"/>
<dbReference type="KEGG" id="ecj:JW0700"/>
<dbReference type="KEGG" id="eco:b0710"/>
<dbReference type="KEGG" id="ecoc:C3026_03550"/>
<dbReference type="PATRIC" id="fig|1411691.4.peg.1563"/>
<dbReference type="EchoBASE" id="EB3089"/>
<dbReference type="eggNOG" id="COG0327">
    <property type="taxonomic scope" value="Bacteria"/>
</dbReference>
<dbReference type="HOGENOM" id="CLU_037423_3_0_6"/>
<dbReference type="InParanoid" id="P0AFP6"/>
<dbReference type="OMA" id="RRVGWCT"/>
<dbReference type="OrthoDB" id="9800881at2"/>
<dbReference type="PhylomeDB" id="P0AFP6"/>
<dbReference type="BioCyc" id="EcoCyc:G6379-MONOMER"/>
<dbReference type="EvolutionaryTrace" id="P0AFP6"/>
<dbReference type="PRO" id="PR:P0AFP6"/>
<dbReference type="Proteomes" id="UP000000625">
    <property type="component" value="Chromosome"/>
</dbReference>
<dbReference type="GO" id="GO:0060187">
    <property type="term" value="C:cell pole"/>
    <property type="evidence" value="ECO:0000314"/>
    <property type="project" value="EcoCyc"/>
</dbReference>
<dbReference type="GO" id="GO:0005737">
    <property type="term" value="C:cytoplasm"/>
    <property type="evidence" value="ECO:0000318"/>
    <property type="project" value="GO_Central"/>
</dbReference>
<dbReference type="GO" id="GO:0005829">
    <property type="term" value="C:cytosol"/>
    <property type="evidence" value="ECO:0000314"/>
    <property type="project" value="EcoCyc"/>
</dbReference>
<dbReference type="GO" id="GO:0042802">
    <property type="term" value="F:identical protein binding"/>
    <property type="evidence" value="ECO:0000314"/>
    <property type="project" value="EcoCyc"/>
</dbReference>
<dbReference type="GO" id="GO:0046872">
    <property type="term" value="F:metal ion binding"/>
    <property type="evidence" value="ECO:0000314"/>
    <property type="project" value="EcoCyc"/>
</dbReference>
<dbReference type="GO" id="GO:0006281">
    <property type="term" value="P:DNA repair"/>
    <property type="evidence" value="ECO:0007669"/>
    <property type="project" value="UniProtKB-KW"/>
</dbReference>
<dbReference type="GO" id="GO:0034214">
    <property type="term" value="P:protein hexamerization"/>
    <property type="evidence" value="ECO:0000314"/>
    <property type="project" value="EcoCyc"/>
</dbReference>
<dbReference type="GO" id="GO:0010212">
    <property type="term" value="P:response to ionizing radiation"/>
    <property type="evidence" value="ECO:0000315"/>
    <property type="project" value="EcoCyc"/>
</dbReference>
<dbReference type="FunFam" id="3.40.1390.30:FF:000002">
    <property type="entry name" value="Nif3-like dinuclear metal center protein"/>
    <property type="match status" value="1"/>
</dbReference>
<dbReference type="FunFam" id="3.40.1390.30:FF:000003">
    <property type="entry name" value="Nif3-like dinuclear metal center protein"/>
    <property type="match status" value="1"/>
</dbReference>
<dbReference type="Gene3D" id="3.40.1390.30">
    <property type="entry name" value="NIF3 (NGG1p interacting factor 3)-like"/>
    <property type="match status" value="2"/>
</dbReference>
<dbReference type="InterPro" id="IPR002678">
    <property type="entry name" value="DUF34/NIF3"/>
</dbReference>
<dbReference type="InterPro" id="IPR036069">
    <property type="entry name" value="DUF34/NIF3_sf"/>
</dbReference>
<dbReference type="NCBIfam" id="NF008064">
    <property type="entry name" value="PRK10799.1"/>
    <property type="match status" value="1"/>
</dbReference>
<dbReference type="NCBIfam" id="TIGR00486">
    <property type="entry name" value="YbgI_SA1388"/>
    <property type="match status" value="1"/>
</dbReference>
<dbReference type="PANTHER" id="PTHR13799:SF14">
    <property type="entry name" value="GTP CYCLOHYDROLASE 1 TYPE 2 HOMOLOG"/>
    <property type="match status" value="1"/>
</dbReference>
<dbReference type="PANTHER" id="PTHR13799">
    <property type="entry name" value="NGG1 INTERACTING FACTOR 3"/>
    <property type="match status" value="1"/>
</dbReference>
<dbReference type="Pfam" id="PF01784">
    <property type="entry name" value="DUF34_NIF3"/>
    <property type="match status" value="1"/>
</dbReference>
<dbReference type="SUPFAM" id="SSF102705">
    <property type="entry name" value="NIF3 (NGG1p interacting factor 3)-like"/>
    <property type="match status" value="1"/>
</dbReference>